<gene>
    <name evidence="1" type="primary">L3</name>
</gene>
<proteinExistence type="inferred from homology"/>
<protein>
    <recommendedName>
        <fullName evidence="1">Protease</fullName>
        <ecNumber evidence="1">3.4.22.39</ecNumber>
    </recommendedName>
    <alternativeName>
        <fullName evidence="1">Adenain</fullName>
    </alternativeName>
    <alternativeName>
        <fullName evidence="1">Adenovirus protease</fullName>
        <shortName evidence="1">AVP</shortName>
    </alternativeName>
    <alternativeName>
        <fullName evidence="1">Adenovirus proteinase</fullName>
    </alternativeName>
    <alternativeName>
        <fullName evidence="1">Endoprotease</fullName>
    </alternativeName>
</protein>
<dbReference type="EC" id="3.4.22.39" evidence="1"/>
<dbReference type="EMBL" id="AF108105">
    <property type="protein sequence ID" value="AAD20324.1"/>
    <property type="molecule type" value="Genomic_DNA"/>
</dbReference>
<dbReference type="SMR" id="Q9WF19"/>
<dbReference type="MEROPS" id="C05.001"/>
<dbReference type="Proteomes" id="UP000099345">
    <property type="component" value="Genome"/>
</dbReference>
<dbReference type="GO" id="GO:0042025">
    <property type="term" value="C:host cell nucleus"/>
    <property type="evidence" value="ECO:0007669"/>
    <property type="project" value="UniProtKB-SubCell"/>
</dbReference>
<dbReference type="GO" id="GO:0044423">
    <property type="term" value="C:virion component"/>
    <property type="evidence" value="ECO:0007669"/>
    <property type="project" value="UniProtKB-UniRule"/>
</dbReference>
<dbReference type="GO" id="GO:0004197">
    <property type="term" value="F:cysteine-type endopeptidase activity"/>
    <property type="evidence" value="ECO:0007669"/>
    <property type="project" value="UniProtKB-UniRule"/>
</dbReference>
<dbReference type="GO" id="GO:0003677">
    <property type="term" value="F:DNA binding"/>
    <property type="evidence" value="ECO:0007669"/>
    <property type="project" value="UniProtKB-UniRule"/>
</dbReference>
<dbReference type="GO" id="GO:0006508">
    <property type="term" value="P:proteolysis"/>
    <property type="evidence" value="ECO:0007669"/>
    <property type="project" value="UniProtKB-KW"/>
</dbReference>
<dbReference type="Gene3D" id="3.40.395.10">
    <property type="entry name" value="Adenoviral Proteinase, Chain A"/>
    <property type="match status" value="1"/>
</dbReference>
<dbReference type="HAMAP" id="MF_04059">
    <property type="entry name" value="ADV_PRO"/>
    <property type="match status" value="1"/>
</dbReference>
<dbReference type="InterPro" id="IPR038765">
    <property type="entry name" value="Papain-like_cys_pep_sf"/>
</dbReference>
<dbReference type="InterPro" id="IPR000855">
    <property type="entry name" value="Peptidase_C5"/>
</dbReference>
<dbReference type="Pfam" id="PF00770">
    <property type="entry name" value="Peptidase_C5"/>
    <property type="match status" value="1"/>
</dbReference>
<dbReference type="PIRSF" id="PIRSF001218">
    <property type="entry name" value="Protease_ADV"/>
    <property type="match status" value="1"/>
</dbReference>
<dbReference type="PRINTS" id="PR00703">
    <property type="entry name" value="ADVENDOPTASE"/>
</dbReference>
<dbReference type="SUPFAM" id="SSF54001">
    <property type="entry name" value="Cysteine proteinases"/>
    <property type="match status" value="1"/>
</dbReference>
<feature type="chain" id="PRO_0000218029" description="Protease">
    <location>
        <begin position="1"/>
        <end position="209"/>
    </location>
</feature>
<feature type="active site" evidence="1">
    <location>
        <position position="55"/>
    </location>
</feature>
<feature type="active site" evidence="1">
    <location>
        <position position="72"/>
    </location>
</feature>
<feature type="active site" evidence="1">
    <location>
        <position position="123"/>
    </location>
</feature>
<feature type="site" description="Cleavage; by autolysis" evidence="1">
    <location>
        <begin position="52"/>
        <end position="53"/>
    </location>
</feature>
<feature type="disulfide bond" description="Interchain (with C-10 in cleaved protease cofactor pVI-C)" evidence="1">
    <location>
        <position position="105"/>
    </location>
</feature>
<name>PRO_ADE17</name>
<organism>
    <name type="scientific">Human adenovirus D serotype 17</name>
    <name type="common">HAdV-17</name>
    <name type="synonym">Human adenovirus 17</name>
    <dbReference type="NCBI Taxonomy" id="46922"/>
    <lineage>
        <taxon>Viruses</taxon>
        <taxon>Varidnaviria</taxon>
        <taxon>Bamfordvirae</taxon>
        <taxon>Preplasmiviricota</taxon>
        <taxon>Tectiliviricetes</taxon>
        <taxon>Rowavirales</taxon>
        <taxon>Adenoviridae</taxon>
        <taxon>Mastadenovirus</taxon>
        <taxon>Human mastadenovirus D</taxon>
    </lineage>
</organism>
<organismHost>
    <name type="scientific">Homo sapiens</name>
    <name type="common">Human</name>
    <dbReference type="NCBI Taxonomy" id="9606"/>
</organismHost>
<comment type="function">
    <text evidence="1">Cleaves viral precursor proteins (pTP, pIIIa, pVI, pVII, pVIII, and pX) inside newly assembled particles giving rise to mature virions. Protease complexed to its cofactor slides along the viral DNA to specifically locate and cleave the viral precursors. Mature virions have a weakened organization compared to the unmature virions, thereby facilitating subsequent uncoating. Without maturation, the particle lacks infectivity and is unable to uncoat. Late in adenovirus infection, in the cytoplasm, may participate in the cytoskeleton destruction. Cleaves host cell cytoskeletal keratins K7 and K18.</text>
</comment>
<comment type="catalytic activity">
    <reaction evidence="1">
        <text>Cleaves proteins of the adenovirus and its host cell at two consensus sites: -Yaa-Xaa-Gly-Gly-|-Xaa- and -Yaa-Xaa-Gly-Xaa-|-Gly- (in which Yaa is Met, Ile or Leu, and Xaa is any amino acid).</text>
        <dbReference type="EC" id="3.4.22.39"/>
    </reaction>
</comment>
<comment type="activity regulation">
    <text evidence="1">Requires DNA and protease cofactor for maximal activation. Inside nascent virions, becomes partially activated by binding to the viral DNA, allowing it to cleave the cofactor that binds to the protease and fully activates it. Actin, like the viral protease cofactor, seems to act as a cofactor in the cleavage of cytokeratin 18 and of actin itself.</text>
</comment>
<comment type="subunit">
    <text evidence="1">Interacts with protease cofactor pVI-C; this interaction is necessary for protease activation.</text>
</comment>
<comment type="subcellular location">
    <subcellularLocation>
        <location evidence="1">Virion</location>
    </subcellularLocation>
    <subcellularLocation>
        <location evidence="1">Host nucleus</location>
    </subcellularLocation>
    <text evidence="1">Present in about 10 copies per virion.</text>
</comment>
<comment type="induction">
    <text evidence="1">Expressed in the late phase of the viral replicative cycle.</text>
</comment>
<comment type="miscellaneous">
    <text evidence="1">All late proteins expressed from the major late promoter are produced by alternative splicing and alternative polyadenylation of the same gene giving rise to non-overlapping ORFs. A leader sequence is present in the N-terminus of all these mRNAs and is recognized by the viral shutoff protein to provide expression although conventional translation via ribosome scanning from the cap has been shut off in the host cell.</text>
</comment>
<comment type="similarity">
    <text evidence="1">Belongs to the peptidase C5 family.</text>
</comment>
<keyword id="KW-0068">Autocatalytic cleavage</keyword>
<keyword id="KW-1015">Disulfide bond</keyword>
<keyword id="KW-0238">DNA-binding</keyword>
<keyword id="KW-1048">Host nucleus</keyword>
<keyword id="KW-0378">Hydrolase</keyword>
<keyword id="KW-0426">Late protein</keyword>
<keyword id="KW-0645">Protease</keyword>
<keyword id="KW-1185">Reference proteome</keyword>
<keyword id="KW-0788">Thiol protease</keyword>
<keyword id="KW-0946">Virion</keyword>
<sequence>MSGSSERELASIVRDLGCGPTFWAPTTQRFPGFLAGDKLACAIVNTAGRETGGVHWLAFGWNPRSRTCYMFDPFGFSDRRLKQIYSFEYEAMLRRSAVASSPDRCLSLEQSTQTVQGPDSAACGLFCCMFLHAFVHWPDRPMDGNPTMNLLTGVPNGMLQSPQVLPTLRRNQEELYRFLARHSPYFRSHRAAIEHATAFDKMKQLRVSQ</sequence>
<reference key="1">
    <citation type="journal article" date="1999" name="J. Virol.">
        <title>Group D adenoviruses infect primary central nervous system cells more efficiently than those from group C.</title>
        <authorList>
            <person name="Chillon M."/>
            <person name="Bosch A."/>
            <person name="Zabner J."/>
            <person name="Law L."/>
            <person name="Armentano D."/>
            <person name="Welsh M.J."/>
            <person name="Davidson B.L."/>
        </authorList>
    </citation>
    <scope>NUCLEOTIDE SEQUENCE [GENOMIC DNA]</scope>
</reference>
<evidence type="ECO:0000255" key="1">
    <source>
        <dbReference type="HAMAP-Rule" id="MF_04059"/>
    </source>
</evidence>
<accession>Q9WF19</accession>